<feature type="chain" id="PRO_0000407637" description="Methionine aminopeptidase 2-1">
    <location>
        <begin position="1"/>
        <end position="486"/>
    </location>
</feature>
<feature type="region of interest" description="Disordered" evidence="2">
    <location>
        <begin position="1"/>
        <end position="120"/>
    </location>
</feature>
<feature type="compositionally biased region" description="Basic and acidic residues" evidence="2">
    <location>
        <begin position="1"/>
        <end position="10"/>
    </location>
</feature>
<feature type="compositionally biased region" description="Acidic residues" evidence="2">
    <location>
        <begin position="46"/>
        <end position="56"/>
    </location>
</feature>
<feature type="compositionally biased region" description="Basic residues" evidence="2">
    <location>
        <begin position="93"/>
        <end position="108"/>
    </location>
</feature>
<feature type="binding site" evidence="1">
    <location>
        <position position="238"/>
    </location>
    <ligand>
        <name>substrate</name>
    </ligand>
</feature>
<feature type="binding site" evidence="1">
    <location>
        <position position="259"/>
    </location>
    <ligand>
        <name>a divalent metal cation</name>
        <dbReference type="ChEBI" id="CHEBI:60240"/>
        <label>1</label>
    </ligand>
</feature>
<feature type="binding site" evidence="1">
    <location>
        <position position="270"/>
    </location>
    <ligand>
        <name>a divalent metal cation</name>
        <dbReference type="ChEBI" id="CHEBI:60240"/>
        <label>1</label>
    </ligand>
</feature>
<feature type="binding site" evidence="1">
    <location>
        <position position="270"/>
    </location>
    <ligand>
        <name>a divalent metal cation</name>
        <dbReference type="ChEBI" id="CHEBI:60240"/>
        <label>2</label>
        <note>catalytic</note>
    </ligand>
</feature>
<feature type="binding site" evidence="1">
    <location>
        <position position="339"/>
    </location>
    <ligand>
        <name>a divalent metal cation</name>
        <dbReference type="ChEBI" id="CHEBI:60240"/>
        <label>2</label>
        <note>catalytic</note>
    </ligand>
</feature>
<feature type="binding site" evidence="1">
    <location>
        <position position="347"/>
    </location>
    <ligand>
        <name>substrate</name>
    </ligand>
</feature>
<feature type="binding site" evidence="1">
    <location>
        <position position="372"/>
    </location>
    <ligand>
        <name>a divalent metal cation</name>
        <dbReference type="ChEBI" id="CHEBI:60240"/>
        <label>2</label>
        <note>catalytic</note>
    </ligand>
</feature>
<feature type="binding site" evidence="1">
    <location>
        <position position="467"/>
    </location>
    <ligand>
        <name>a divalent metal cation</name>
        <dbReference type="ChEBI" id="CHEBI:60240"/>
        <label>1</label>
    </ligand>
</feature>
<feature type="binding site" evidence="1">
    <location>
        <position position="467"/>
    </location>
    <ligand>
        <name>a divalent metal cation</name>
        <dbReference type="ChEBI" id="CHEBI:60240"/>
        <label>2</label>
        <note>catalytic</note>
    </ligand>
</feature>
<keyword id="KW-0031">Aminopeptidase</keyword>
<keyword id="KW-0963">Cytoplasm</keyword>
<keyword id="KW-0378">Hydrolase</keyword>
<keyword id="KW-0479">Metal-binding</keyword>
<keyword id="KW-0645">Protease</keyword>
<gene>
    <name type="ORF">AFUB_018820</name>
</gene>
<accession>B0XTJ7</accession>
<protein>
    <recommendedName>
        <fullName evidence="1">Methionine aminopeptidase 2-1</fullName>
        <shortName evidence="1">MAP 2-1</shortName>
        <shortName evidence="1">MetAP 2-1</shortName>
        <ecNumber evidence="1">3.4.11.18</ecNumber>
    </recommendedName>
    <alternativeName>
        <fullName evidence="1">Peptidase M</fullName>
    </alternativeName>
</protein>
<dbReference type="EC" id="3.4.11.18" evidence="1"/>
<dbReference type="EMBL" id="DS499595">
    <property type="protein sequence ID" value="EDP53838.1"/>
    <property type="molecule type" value="Genomic_DNA"/>
</dbReference>
<dbReference type="SMR" id="B0XTJ7"/>
<dbReference type="EnsemblFungi" id="EDP53838">
    <property type="protein sequence ID" value="EDP53838"/>
    <property type="gene ID" value="AFUB_018820"/>
</dbReference>
<dbReference type="HOGENOM" id="CLU_015857_7_1_1"/>
<dbReference type="OrthoDB" id="65903at5052"/>
<dbReference type="PhylomeDB" id="B0XTJ7"/>
<dbReference type="Proteomes" id="UP000001699">
    <property type="component" value="Unassembled WGS sequence"/>
</dbReference>
<dbReference type="GO" id="GO:0005737">
    <property type="term" value="C:cytoplasm"/>
    <property type="evidence" value="ECO:0007669"/>
    <property type="project" value="UniProtKB-SubCell"/>
</dbReference>
<dbReference type="GO" id="GO:0004239">
    <property type="term" value="F:initiator methionyl aminopeptidase activity"/>
    <property type="evidence" value="ECO:0007669"/>
    <property type="project" value="UniProtKB-UniRule"/>
</dbReference>
<dbReference type="GO" id="GO:0046872">
    <property type="term" value="F:metal ion binding"/>
    <property type="evidence" value="ECO:0007669"/>
    <property type="project" value="UniProtKB-UniRule"/>
</dbReference>
<dbReference type="GO" id="GO:0070006">
    <property type="term" value="F:metalloaminopeptidase activity"/>
    <property type="evidence" value="ECO:0007669"/>
    <property type="project" value="UniProtKB-UniRule"/>
</dbReference>
<dbReference type="GO" id="GO:0006508">
    <property type="term" value="P:proteolysis"/>
    <property type="evidence" value="ECO:0007669"/>
    <property type="project" value="UniProtKB-KW"/>
</dbReference>
<dbReference type="CDD" id="cd01088">
    <property type="entry name" value="MetAP2"/>
    <property type="match status" value="1"/>
</dbReference>
<dbReference type="Gene3D" id="3.90.230.10">
    <property type="entry name" value="Creatinase/methionine aminopeptidase superfamily"/>
    <property type="match status" value="1"/>
</dbReference>
<dbReference type="Gene3D" id="1.10.10.10">
    <property type="entry name" value="Winged helix-like DNA-binding domain superfamily/Winged helix DNA-binding domain"/>
    <property type="match status" value="1"/>
</dbReference>
<dbReference type="HAMAP" id="MF_03175">
    <property type="entry name" value="MetAP_2_euk"/>
    <property type="match status" value="1"/>
</dbReference>
<dbReference type="InterPro" id="IPR036005">
    <property type="entry name" value="Creatinase/aminopeptidase-like"/>
</dbReference>
<dbReference type="InterPro" id="IPR050247">
    <property type="entry name" value="Met_Aminopeptidase_Type2"/>
</dbReference>
<dbReference type="InterPro" id="IPR000994">
    <property type="entry name" value="Pept_M24"/>
</dbReference>
<dbReference type="InterPro" id="IPR001714">
    <property type="entry name" value="Pept_M24_MAP"/>
</dbReference>
<dbReference type="InterPro" id="IPR002468">
    <property type="entry name" value="Pept_M24A_MAP2"/>
</dbReference>
<dbReference type="InterPro" id="IPR018349">
    <property type="entry name" value="Pept_M24A_MAP2_BS"/>
</dbReference>
<dbReference type="InterPro" id="IPR036388">
    <property type="entry name" value="WH-like_DNA-bd_sf"/>
</dbReference>
<dbReference type="InterPro" id="IPR036390">
    <property type="entry name" value="WH_DNA-bd_sf"/>
</dbReference>
<dbReference type="NCBIfam" id="TIGR00501">
    <property type="entry name" value="met_pdase_II"/>
    <property type="match status" value="1"/>
</dbReference>
<dbReference type="PANTHER" id="PTHR45777">
    <property type="entry name" value="METHIONINE AMINOPEPTIDASE 2"/>
    <property type="match status" value="1"/>
</dbReference>
<dbReference type="PANTHER" id="PTHR45777:SF1">
    <property type="entry name" value="METHIONINE AMINOPEPTIDASE 2-2"/>
    <property type="match status" value="1"/>
</dbReference>
<dbReference type="Pfam" id="PF00557">
    <property type="entry name" value="Peptidase_M24"/>
    <property type="match status" value="1"/>
</dbReference>
<dbReference type="PRINTS" id="PR00599">
    <property type="entry name" value="MAPEPTIDASE"/>
</dbReference>
<dbReference type="SUPFAM" id="SSF55920">
    <property type="entry name" value="Creatinase/aminopeptidase"/>
    <property type="match status" value="1"/>
</dbReference>
<dbReference type="SUPFAM" id="SSF46785">
    <property type="entry name" value="Winged helix' DNA-binding domain"/>
    <property type="match status" value="1"/>
</dbReference>
<dbReference type="PROSITE" id="PS01202">
    <property type="entry name" value="MAP_2"/>
    <property type="match status" value="1"/>
</dbReference>
<sequence length="486" mass="53508">MGSKSPEGHRQAPHASNCNELKPANPDPQISQNGSGSADLDRGVIGDDDDDEDAEENGVNTETPNVGKLNQPPFPNLDQVHVTTTDGLCITEKKKKRKKSNKKKKKTKSGALPATELKQTSPPRVLVSTLFPSEYPVGELVPYDCTARTTDEELRYNSRLWDDDFLPDYRQAAEIHRQVRQYAQKELIKPGATLLSIAEGIEDGVRALSGHQGLEPGDFFKAGMGFPTGLCLNHIAAHWTPNPREKDVILDKGDVLKVDFGVHVNGRIVDSAFTVAFDDKYDNLLTAVREATNTGIKHAGVDARMSDIGAAIQEVMESYEVEIDGKVFPVKAIRNITGHDILRYHIHGGKQIPFIKNNNQDKMEEGEVYAIETFGSTGRGFLDDDVGVYGYGRNENMSGANLRLSSAKSLLKTIDASFGSIVFSRRYLERLGVKNYLLGMKNLIDNGIVECYSPLVDVKGSYTAQFEHTILLHSGGKEVISRGDDY</sequence>
<evidence type="ECO:0000255" key="1">
    <source>
        <dbReference type="HAMAP-Rule" id="MF_03175"/>
    </source>
</evidence>
<evidence type="ECO:0000256" key="2">
    <source>
        <dbReference type="SAM" id="MobiDB-lite"/>
    </source>
</evidence>
<comment type="function">
    <text evidence="1">Cotranslationally removes the N-terminal methionine from nascent proteins. The N-terminal methionine is often cleaved when the second residue in the primary sequence is small and uncharged (Met-Ala-, Cys, Gly, Pro, Ser, Thr, or Val).</text>
</comment>
<comment type="catalytic activity">
    <reaction evidence="1">
        <text>Release of N-terminal amino acids, preferentially methionine, from peptides and arylamides.</text>
        <dbReference type="EC" id="3.4.11.18"/>
    </reaction>
</comment>
<comment type="cofactor">
    <cofactor evidence="1">
        <name>Co(2+)</name>
        <dbReference type="ChEBI" id="CHEBI:48828"/>
    </cofactor>
    <cofactor evidence="1">
        <name>Zn(2+)</name>
        <dbReference type="ChEBI" id="CHEBI:29105"/>
    </cofactor>
    <cofactor evidence="1">
        <name>Mn(2+)</name>
        <dbReference type="ChEBI" id="CHEBI:29035"/>
    </cofactor>
    <cofactor evidence="1">
        <name>Fe(2+)</name>
        <dbReference type="ChEBI" id="CHEBI:29033"/>
    </cofactor>
    <text evidence="1">Binds 2 divalent metal cations per subunit. Has a high-affinity and a low affinity metal-binding site. The true nature of the physiological cofactor is under debate. The enzyme is active with cobalt, zinc, manganese or divalent iron ions. Most likely, methionine aminopeptidases function as mononuclear Fe(2+)-metalloproteases under physiological conditions, and the catalytically relevant metal-binding site has been assigned to the histidine-containing high-affinity site.</text>
</comment>
<comment type="subcellular location">
    <subcellularLocation>
        <location evidence="1">Cytoplasm</location>
    </subcellularLocation>
</comment>
<comment type="similarity">
    <text evidence="1">Belongs to the peptidase M24A family. Methionine aminopeptidase eukaryotic type 2 subfamily.</text>
</comment>
<organism>
    <name type="scientific">Aspergillus fumigatus (strain CBS 144.89 / FGSC A1163 / CEA10)</name>
    <name type="common">Neosartorya fumigata</name>
    <dbReference type="NCBI Taxonomy" id="451804"/>
    <lineage>
        <taxon>Eukaryota</taxon>
        <taxon>Fungi</taxon>
        <taxon>Dikarya</taxon>
        <taxon>Ascomycota</taxon>
        <taxon>Pezizomycotina</taxon>
        <taxon>Eurotiomycetes</taxon>
        <taxon>Eurotiomycetidae</taxon>
        <taxon>Eurotiales</taxon>
        <taxon>Aspergillaceae</taxon>
        <taxon>Aspergillus</taxon>
        <taxon>Aspergillus subgen. Fumigati</taxon>
    </lineage>
</organism>
<reference key="1">
    <citation type="journal article" date="2008" name="PLoS Genet.">
        <title>Genomic islands in the pathogenic filamentous fungus Aspergillus fumigatus.</title>
        <authorList>
            <person name="Fedorova N.D."/>
            <person name="Khaldi N."/>
            <person name="Joardar V.S."/>
            <person name="Maiti R."/>
            <person name="Amedeo P."/>
            <person name="Anderson M.J."/>
            <person name="Crabtree J."/>
            <person name="Silva J.C."/>
            <person name="Badger J.H."/>
            <person name="Albarraq A."/>
            <person name="Angiuoli S."/>
            <person name="Bussey H."/>
            <person name="Bowyer P."/>
            <person name="Cotty P.J."/>
            <person name="Dyer P.S."/>
            <person name="Egan A."/>
            <person name="Galens K."/>
            <person name="Fraser-Liggett C.M."/>
            <person name="Haas B.J."/>
            <person name="Inman J.M."/>
            <person name="Kent R."/>
            <person name="Lemieux S."/>
            <person name="Malavazi I."/>
            <person name="Orvis J."/>
            <person name="Roemer T."/>
            <person name="Ronning C.M."/>
            <person name="Sundaram J.P."/>
            <person name="Sutton G."/>
            <person name="Turner G."/>
            <person name="Venter J.C."/>
            <person name="White O.R."/>
            <person name="Whitty B.R."/>
            <person name="Youngman P."/>
            <person name="Wolfe K.H."/>
            <person name="Goldman G.H."/>
            <person name="Wortman J.R."/>
            <person name="Jiang B."/>
            <person name="Denning D.W."/>
            <person name="Nierman W.C."/>
        </authorList>
    </citation>
    <scope>NUCLEOTIDE SEQUENCE [LARGE SCALE GENOMIC DNA]</scope>
    <source>
        <strain>CBS 144.89 / FGSC A1163 / CEA10</strain>
    </source>
</reference>
<proteinExistence type="inferred from homology"/>
<name>MAP21_ASPFC</name>